<comment type="function">
    <text evidence="1">This protein binds to the 23S rRNA, and is important in its secondary structure. It is located near the subunit interface in the base of the L7/L12 stalk, and near the tRNA binding site of the peptidyltransferase center.</text>
</comment>
<comment type="subunit">
    <text evidence="1">Part of the 50S ribosomal subunit.</text>
</comment>
<comment type="similarity">
    <text evidence="1">Belongs to the universal ribosomal protein uL6 family.</text>
</comment>
<protein>
    <recommendedName>
        <fullName evidence="1">Large ribosomal subunit protein uL6</fullName>
    </recommendedName>
    <alternativeName>
        <fullName evidence="2">50S ribosomal protein L6</fullName>
    </alternativeName>
</protein>
<sequence length="184" mass="20893">MPIDAWVREEVEIPEGVEVTVENNVVKVKGPKGELERELKYPGVKIFTEDGKVVVYKEFPRKKDIAIARTFKAHINNMIKGVTEGFTYKLKVVYSHFPVTVKVQGDEVIIENFLGEKNPRRAKILPGVTVKVRGQEITVEGIDKEKVGQTAANIEQATRITKWDRRVFQDGIYIVEKAGKPIKF</sequence>
<gene>
    <name evidence="1" type="primary">rpl6</name>
    <name type="ordered locus">TGAM_1986</name>
</gene>
<reference key="1">
    <citation type="journal article" date="2007" name="Genome Biol.">
        <title>Genome analysis and genome-wide proteomics of Thermococcus gammatolerans, the most radioresistant organism known amongst the Archaea.</title>
        <authorList>
            <person name="Zivanovic Y."/>
            <person name="Armengaud J."/>
            <person name="Lagorce A."/>
            <person name="Leplat C."/>
            <person name="Guerin P."/>
            <person name="Dutertre M."/>
            <person name="Anthouard V."/>
            <person name="Forterre P."/>
            <person name="Wincker P."/>
            <person name="Confalonieri F."/>
        </authorList>
    </citation>
    <scope>NUCLEOTIDE SEQUENCE [LARGE SCALE GENOMIC DNA]</scope>
    <source>
        <strain>DSM 15229 / JCM 11827 / EJ3</strain>
    </source>
</reference>
<keyword id="KW-1185">Reference proteome</keyword>
<keyword id="KW-0687">Ribonucleoprotein</keyword>
<keyword id="KW-0689">Ribosomal protein</keyword>
<keyword id="KW-0694">RNA-binding</keyword>
<keyword id="KW-0699">rRNA-binding</keyword>
<name>RL6_THEGJ</name>
<accession>C5A269</accession>
<organism>
    <name type="scientific">Thermococcus gammatolerans (strain DSM 15229 / JCM 11827 / EJ3)</name>
    <dbReference type="NCBI Taxonomy" id="593117"/>
    <lineage>
        <taxon>Archaea</taxon>
        <taxon>Methanobacteriati</taxon>
        <taxon>Methanobacteriota</taxon>
        <taxon>Thermococci</taxon>
        <taxon>Thermococcales</taxon>
        <taxon>Thermococcaceae</taxon>
        <taxon>Thermococcus</taxon>
    </lineage>
</organism>
<proteinExistence type="inferred from homology"/>
<evidence type="ECO:0000255" key="1">
    <source>
        <dbReference type="HAMAP-Rule" id="MF_01365"/>
    </source>
</evidence>
<evidence type="ECO:0000305" key="2"/>
<feature type="chain" id="PRO_1000214939" description="Large ribosomal subunit protein uL6">
    <location>
        <begin position="1"/>
        <end position="184"/>
    </location>
</feature>
<dbReference type="EMBL" id="CP001398">
    <property type="protein sequence ID" value="ACS34488.1"/>
    <property type="molecule type" value="Genomic_DNA"/>
</dbReference>
<dbReference type="RefSeq" id="WP_015859592.1">
    <property type="nucleotide sequence ID" value="NC_012804.1"/>
</dbReference>
<dbReference type="SMR" id="C5A269"/>
<dbReference type="STRING" id="593117.TGAM_1986"/>
<dbReference type="PaxDb" id="593117-TGAM_1986"/>
<dbReference type="GeneID" id="7987043"/>
<dbReference type="KEGG" id="tga:TGAM_1986"/>
<dbReference type="PATRIC" id="fig|593117.10.peg.1996"/>
<dbReference type="eggNOG" id="arCOG04090">
    <property type="taxonomic scope" value="Archaea"/>
</dbReference>
<dbReference type="HOGENOM" id="CLU_065464_0_0_2"/>
<dbReference type="OrthoDB" id="7144at2157"/>
<dbReference type="Proteomes" id="UP000001488">
    <property type="component" value="Chromosome"/>
</dbReference>
<dbReference type="GO" id="GO:0022625">
    <property type="term" value="C:cytosolic large ribosomal subunit"/>
    <property type="evidence" value="ECO:0007669"/>
    <property type="project" value="TreeGrafter"/>
</dbReference>
<dbReference type="GO" id="GO:0019843">
    <property type="term" value="F:rRNA binding"/>
    <property type="evidence" value="ECO:0007669"/>
    <property type="project" value="UniProtKB-UniRule"/>
</dbReference>
<dbReference type="GO" id="GO:0003735">
    <property type="term" value="F:structural constituent of ribosome"/>
    <property type="evidence" value="ECO:0007669"/>
    <property type="project" value="InterPro"/>
</dbReference>
<dbReference type="GO" id="GO:0002181">
    <property type="term" value="P:cytoplasmic translation"/>
    <property type="evidence" value="ECO:0007669"/>
    <property type="project" value="TreeGrafter"/>
</dbReference>
<dbReference type="FunFam" id="3.90.930.12:FF:000008">
    <property type="entry name" value="50S ribosomal protein L6"/>
    <property type="match status" value="1"/>
</dbReference>
<dbReference type="FunFam" id="3.90.930.12:FF:000004">
    <property type="entry name" value="60S ribosomal protein L9"/>
    <property type="match status" value="1"/>
</dbReference>
<dbReference type="Gene3D" id="3.90.930.12">
    <property type="entry name" value="Ribosomal protein L6, alpha-beta domain"/>
    <property type="match status" value="2"/>
</dbReference>
<dbReference type="HAMAP" id="MF_01365_A">
    <property type="entry name" value="Ribosomal_uL6_A"/>
    <property type="match status" value="1"/>
</dbReference>
<dbReference type="InterPro" id="IPR000702">
    <property type="entry name" value="Ribosomal_uL6-like"/>
</dbReference>
<dbReference type="InterPro" id="IPR036789">
    <property type="entry name" value="Ribosomal_uL6-like_a/b-dom_sf"/>
</dbReference>
<dbReference type="InterPro" id="IPR020040">
    <property type="entry name" value="Ribosomal_uL6_a/b-dom"/>
</dbReference>
<dbReference type="InterPro" id="IPR019907">
    <property type="entry name" value="Ribosomal_uL6_arc"/>
</dbReference>
<dbReference type="InterPro" id="IPR002359">
    <property type="entry name" value="Ribosomal_uL6_CS2"/>
</dbReference>
<dbReference type="NCBIfam" id="NF004037">
    <property type="entry name" value="PRK05518.1"/>
    <property type="match status" value="1"/>
</dbReference>
<dbReference type="NCBIfam" id="TIGR03653">
    <property type="entry name" value="uL6_arch"/>
    <property type="match status" value="1"/>
</dbReference>
<dbReference type="PANTHER" id="PTHR11655:SF16">
    <property type="entry name" value="60S RIBOSOMAL PROTEIN L9"/>
    <property type="match status" value="1"/>
</dbReference>
<dbReference type="PANTHER" id="PTHR11655">
    <property type="entry name" value="60S/50S RIBOSOMAL PROTEIN L6/L9"/>
    <property type="match status" value="1"/>
</dbReference>
<dbReference type="Pfam" id="PF00347">
    <property type="entry name" value="Ribosomal_L6"/>
    <property type="match status" value="2"/>
</dbReference>
<dbReference type="PIRSF" id="PIRSF002162">
    <property type="entry name" value="Ribosomal_L6"/>
    <property type="match status" value="1"/>
</dbReference>
<dbReference type="SUPFAM" id="SSF56053">
    <property type="entry name" value="Ribosomal protein L6"/>
    <property type="match status" value="2"/>
</dbReference>
<dbReference type="PROSITE" id="PS00700">
    <property type="entry name" value="RIBOSOMAL_L6_2"/>
    <property type="match status" value="1"/>
</dbReference>